<gene>
    <name evidence="1" type="primary">tnaA</name>
    <name type="ordered locus">CV_1163</name>
</gene>
<comment type="catalytic activity">
    <reaction evidence="1">
        <text>L-tryptophan + H2O = indole + pyruvate + NH4(+)</text>
        <dbReference type="Rhea" id="RHEA:19553"/>
        <dbReference type="ChEBI" id="CHEBI:15361"/>
        <dbReference type="ChEBI" id="CHEBI:15377"/>
        <dbReference type="ChEBI" id="CHEBI:16881"/>
        <dbReference type="ChEBI" id="CHEBI:28938"/>
        <dbReference type="ChEBI" id="CHEBI:57912"/>
        <dbReference type="EC" id="4.1.99.1"/>
    </reaction>
</comment>
<comment type="cofactor">
    <cofactor evidence="1">
        <name>pyridoxal 5'-phosphate</name>
        <dbReference type="ChEBI" id="CHEBI:597326"/>
    </cofactor>
</comment>
<comment type="pathway">
    <text evidence="1">Amino-acid degradation; L-tryptophan degradation via pyruvate pathway; indole and pyruvate from L-tryptophan: step 1/1.</text>
</comment>
<comment type="subunit">
    <text evidence="1">Homotetramer.</text>
</comment>
<comment type="similarity">
    <text evidence="1">Belongs to the beta-eliminating lyase family.</text>
</comment>
<name>TNAA_CHRVO</name>
<evidence type="ECO:0000255" key="1">
    <source>
        <dbReference type="HAMAP-Rule" id="MF_00544"/>
    </source>
</evidence>
<proteinExistence type="inferred from homology"/>
<organism>
    <name type="scientific">Chromobacterium violaceum (strain ATCC 12472 / DSM 30191 / JCM 1249 / CCUG 213 / NBRC 12614 / NCIMB 9131 / NCTC 9757 / MK)</name>
    <dbReference type="NCBI Taxonomy" id="243365"/>
    <lineage>
        <taxon>Bacteria</taxon>
        <taxon>Pseudomonadati</taxon>
        <taxon>Pseudomonadota</taxon>
        <taxon>Betaproteobacteria</taxon>
        <taxon>Neisseriales</taxon>
        <taxon>Chromobacteriaceae</taxon>
        <taxon>Chromobacterium</taxon>
    </lineage>
</organism>
<dbReference type="EC" id="4.1.99.1" evidence="1"/>
<dbReference type="EMBL" id="AE016825">
    <property type="protein sequence ID" value="AAQ58838.1"/>
    <property type="molecule type" value="Genomic_DNA"/>
</dbReference>
<dbReference type="RefSeq" id="WP_011134718.1">
    <property type="nucleotide sequence ID" value="NC_005085.1"/>
</dbReference>
<dbReference type="SMR" id="Q7NYV9"/>
<dbReference type="STRING" id="243365.CV_1163"/>
<dbReference type="KEGG" id="cvi:CV_1163"/>
<dbReference type="eggNOG" id="COG3033">
    <property type="taxonomic scope" value="Bacteria"/>
</dbReference>
<dbReference type="HOGENOM" id="CLU_047223_0_0_4"/>
<dbReference type="OrthoDB" id="9764079at2"/>
<dbReference type="UniPathway" id="UPA00332">
    <property type="reaction ID" value="UER00452"/>
</dbReference>
<dbReference type="Proteomes" id="UP000001424">
    <property type="component" value="Chromosome"/>
</dbReference>
<dbReference type="GO" id="GO:0009034">
    <property type="term" value="F:tryptophanase activity"/>
    <property type="evidence" value="ECO:0007669"/>
    <property type="project" value="UniProtKB-UniRule"/>
</dbReference>
<dbReference type="Gene3D" id="3.90.1150.10">
    <property type="entry name" value="Aspartate Aminotransferase, domain 1"/>
    <property type="match status" value="1"/>
</dbReference>
<dbReference type="Gene3D" id="3.40.640.10">
    <property type="entry name" value="Type I PLP-dependent aspartate aminotransferase-like (Major domain)"/>
    <property type="match status" value="1"/>
</dbReference>
<dbReference type="HAMAP" id="MF_00544">
    <property type="entry name" value="Tryptophanase"/>
    <property type="match status" value="1"/>
</dbReference>
<dbReference type="InterPro" id="IPR001597">
    <property type="entry name" value="ArAA_b-elim_lyase/Thr_aldolase"/>
</dbReference>
<dbReference type="InterPro" id="IPR011166">
    <property type="entry name" value="Beta-eliminating_lyase"/>
</dbReference>
<dbReference type="InterPro" id="IPR015424">
    <property type="entry name" value="PyrdxlP-dep_Trfase"/>
</dbReference>
<dbReference type="InterPro" id="IPR015421">
    <property type="entry name" value="PyrdxlP-dep_Trfase_major"/>
</dbReference>
<dbReference type="InterPro" id="IPR015422">
    <property type="entry name" value="PyrdxlP-dep_Trfase_small"/>
</dbReference>
<dbReference type="InterPro" id="IPR013440">
    <property type="entry name" value="TNase"/>
</dbReference>
<dbReference type="InterPro" id="IPR018176">
    <property type="entry name" value="Tryptophanase_CS"/>
</dbReference>
<dbReference type="NCBIfam" id="NF009709">
    <property type="entry name" value="PRK13238.1"/>
    <property type="match status" value="1"/>
</dbReference>
<dbReference type="PANTHER" id="PTHR32325">
    <property type="entry name" value="BETA-ELIMINATING LYASE-LIKE PROTEIN-RELATED"/>
    <property type="match status" value="1"/>
</dbReference>
<dbReference type="PANTHER" id="PTHR32325:SF4">
    <property type="entry name" value="TRYPTOPHANASE"/>
    <property type="match status" value="1"/>
</dbReference>
<dbReference type="Pfam" id="PF01212">
    <property type="entry name" value="Beta_elim_lyase"/>
    <property type="match status" value="1"/>
</dbReference>
<dbReference type="PIRSF" id="PIRSF001386">
    <property type="entry name" value="Trpase"/>
    <property type="match status" value="1"/>
</dbReference>
<dbReference type="SUPFAM" id="SSF53383">
    <property type="entry name" value="PLP-dependent transferases"/>
    <property type="match status" value="1"/>
</dbReference>
<dbReference type="PROSITE" id="PS00853">
    <property type="entry name" value="BETA_ELIM_LYASE"/>
    <property type="match status" value="1"/>
</dbReference>
<keyword id="KW-0456">Lyase</keyword>
<keyword id="KW-0663">Pyridoxal phosphate</keyword>
<keyword id="KW-1185">Reference proteome</keyword>
<keyword id="KW-0823">Tryptophan catabolism</keyword>
<reference key="1">
    <citation type="journal article" date="2003" name="Proc. Natl. Acad. Sci. U.S.A.">
        <title>The complete genome sequence of Chromobacterium violaceum reveals remarkable and exploitable bacterial adaptability.</title>
        <authorList>
            <person name="Vasconcelos A.T.R."/>
            <person name="de Almeida D.F."/>
            <person name="Hungria M."/>
            <person name="Guimaraes C.T."/>
            <person name="Antonio R.V."/>
            <person name="Almeida F.C."/>
            <person name="de Almeida L.G.P."/>
            <person name="de Almeida R."/>
            <person name="Alves-Gomes J.A."/>
            <person name="Andrade E.M."/>
            <person name="Araripe J."/>
            <person name="de Araujo M.F.F."/>
            <person name="Astolfi-Filho S."/>
            <person name="Azevedo V."/>
            <person name="Baptista A.J."/>
            <person name="Bataus L.A.M."/>
            <person name="Batista J.S."/>
            <person name="Belo A."/>
            <person name="van den Berg C."/>
            <person name="Bogo M."/>
            <person name="Bonatto S."/>
            <person name="Bordignon J."/>
            <person name="Brigido M.M."/>
            <person name="Brito C.A."/>
            <person name="Brocchi M."/>
            <person name="Burity H.A."/>
            <person name="Camargo A.A."/>
            <person name="Cardoso D.D.P."/>
            <person name="Carneiro N.P."/>
            <person name="Carraro D.M."/>
            <person name="Carvalho C.M.B."/>
            <person name="Cascardo J.C.M."/>
            <person name="Cavada B.S."/>
            <person name="Chueire L.M.O."/>
            <person name="Creczynski-Pasa T.B."/>
            <person name="Cunha-Junior N.C."/>
            <person name="Fagundes N."/>
            <person name="Falcao C.L."/>
            <person name="Fantinatti F."/>
            <person name="Farias I.P."/>
            <person name="Felipe M.S.S."/>
            <person name="Ferrari L.P."/>
            <person name="Ferro J.A."/>
            <person name="Ferro M.I.T."/>
            <person name="Franco G.R."/>
            <person name="Freitas N.S.A."/>
            <person name="Furlan L.R."/>
            <person name="Gazzinelli R.T."/>
            <person name="Gomes E.A."/>
            <person name="Goncalves P.R."/>
            <person name="Grangeiro T.B."/>
            <person name="Grattapaglia D."/>
            <person name="Grisard E.C."/>
            <person name="Hanna E.S."/>
            <person name="Jardim S.N."/>
            <person name="Laurino J."/>
            <person name="Leoi L.C.T."/>
            <person name="Lima L.F.A."/>
            <person name="Loureiro M.F."/>
            <person name="Lyra M.C.C.P."/>
            <person name="Madeira H.M.F."/>
            <person name="Manfio G.P."/>
            <person name="Maranhao A.Q."/>
            <person name="Martins W.S."/>
            <person name="di Mauro S.M.Z."/>
            <person name="de Medeiros S.R.B."/>
            <person name="Meissner R.V."/>
            <person name="Moreira M.A.M."/>
            <person name="Nascimento F.F."/>
            <person name="Nicolas M.F."/>
            <person name="Oliveira J.G."/>
            <person name="Oliveira S.C."/>
            <person name="Paixao R.F.C."/>
            <person name="Parente J.A."/>
            <person name="Pedrosa F.O."/>
            <person name="Pena S.D.J."/>
            <person name="Pereira J.O."/>
            <person name="Pereira M."/>
            <person name="Pinto L.S.R.C."/>
            <person name="Pinto L.S."/>
            <person name="Porto J.I.R."/>
            <person name="Potrich D.P."/>
            <person name="Ramalho-Neto C.E."/>
            <person name="Reis A.M.M."/>
            <person name="Rigo L.U."/>
            <person name="Rondinelli E."/>
            <person name="Santos E.B.P."/>
            <person name="Santos F.R."/>
            <person name="Schneider M.P.C."/>
            <person name="Seuanez H.N."/>
            <person name="Silva A.M.R."/>
            <person name="da Silva A.L.C."/>
            <person name="Silva D.W."/>
            <person name="Silva R."/>
            <person name="Simoes I.C."/>
            <person name="Simon D."/>
            <person name="Soares C.M.A."/>
            <person name="Soares R.B.A."/>
            <person name="Souza E.M."/>
            <person name="Souza K.R.L."/>
            <person name="Souza R.C."/>
            <person name="Steffens M.B.R."/>
            <person name="Steindel M."/>
            <person name="Teixeira S.R."/>
            <person name="Urmenyi T."/>
            <person name="Vettore A."/>
            <person name="Wassem R."/>
            <person name="Zaha A."/>
            <person name="Simpson A.J.G."/>
        </authorList>
    </citation>
    <scope>NUCLEOTIDE SEQUENCE [LARGE SCALE GENOMIC DNA]</scope>
    <source>
        <strain>ATCC 12472 / DSM 30191 / JCM 1249 / CCUG 213 / NBRC 12614 / NCIMB 9131 / NCTC 9757 / MK</strain>
    </source>
</reference>
<protein>
    <recommendedName>
        <fullName evidence="1">Tryptophanase</fullName>
        <ecNumber evidence="1">4.1.99.1</ecNumber>
    </recommendedName>
    <alternativeName>
        <fullName evidence="1">L-tryptophan indole-lyase</fullName>
        <shortName evidence="1">TNase</shortName>
    </alternativeName>
</protein>
<accession>Q7NYV9</accession>
<sequence>MARRIPEPFRIKMVEPIRQTTAEYRRQALQEAGWNPFLLKAEDVYIDLLTDSGTGAMSDRQWAGLMMGDEAYAGSRNFLRLADTVRELFGYAHTIPTHQGRGAEQILFPELVKRCRGERPVFLSNYHFDTTKAHVELAGARAVNALTPRALDTGAAYDWKGDFDLARLGEIVEAEGENVAAIIVTVTCNSAGGQPVSMANIRAASALARSKGIPVVIDAARFAENAWFIRERDPAYAGVAISSIVREMFDYGDMFTMSAKKDGLVNIGGLCCFKNDEALFRAVQVRCVPMEGFITYGGLAGRDMEALAIGLKEGLDDAYLSYRIGQVAYLGERLREGGVPIQTPTGGHAVFVDAARLLPHIPAGQFPAHALACELYLEGGVRAVEIGSLLLGRHPQTGRQEPSPFELMRLTIPRRVYTNDHMDYIADCLIDVKRRAAGVRGLVFDYEPPILRHFTARLRPA</sequence>
<feature type="chain" id="PRO_0000195609" description="Tryptophanase">
    <location>
        <begin position="1"/>
        <end position="461"/>
    </location>
</feature>
<feature type="modified residue" description="N6-(pyridoxal phosphate)lysine" evidence="1">
    <location>
        <position position="261"/>
    </location>
</feature>